<geneLocation type="chloroplast"/>
<protein>
    <recommendedName>
        <fullName evidence="1">Large ribosomal subunit protein uL14c</fullName>
    </recommendedName>
    <alternativeName>
        <fullName evidence="2">50S ribosomal protein L14, chloroplastic</fullName>
    </alternativeName>
</protein>
<sequence>MIQPQTHLNVADNSGARELMCIRIIGASNRRYAHIGDVIVAVIKEAVPNTPLERSEVIRAVIVRTCKELKRNNGMIIRYDDNAAVVIDQEGNPKGTRIFGAIPRELRQLNFTKIVSLAPEVL</sequence>
<comment type="function">
    <text evidence="1">Binds to 23S rRNA.</text>
</comment>
<comment type="subunit">
    <text evidence="1">Part of the 50S ribosomal subunit.</text>
</comment>
<comment type="subcellular location">
    <subcellularLocation>
        <location>Plastid</location>
        <location>Chloroplast</location>
    </subcellularLocation>
</comment>
<comment type="similarity">
    <text evidence="1">Belongs to the universal ribosomal protein uL14 family.</text>
</comment>
<name>RK14_CARPA</name>
<feature type="chain" id="PRO_0000355865" description="Large ribosomal subunit protein uL14c">
    <location>
        <begin position="1"/>
        <end position="122"/>
    </location>
</feature>
<evidence type="ECO:0000255" key="1">
    <source>
        <dbReference type="HAMAP-Rule" id="MF_01367"/>
    </source>
</evidence>
<evidence type="ECO:0000305" key="2"/>
<keyword id="KW-0150">Chloroplast</keyword>
<keyword id="KW-0934">Plastid</keyword>
<keyword id="KW-0687">Ribonucleoprotein</keyword>
<keyword id="KW-0689">Ribosomal protein</keyword>
<keyword id="KW-0694">RNA-binding</keyword>
<keyword id="KW-0699">rRNA-binding</keyword>
<accession>B1A971</accession>
<organism>
    <name type="scientific">Carica papaya</name>
    <name type="common">Papaya</name>
    <dbReference type="NCBI Taxonomy" id="3649"/>
    <lineage>
        <taxon>Eukaryota</taxon>
        <taxon>Viridiplantae</taxon>
        <taxon>Streptophyta</taxon>
        <taxon>Embryophyta</taxon>
        <taxon>Tracheophyta</taxon>
        <taxon>Spermatophyta</taxon>
        <taxon>Magnoliopsida</taxon>
        <taxon>eudicotyledons</taxon>
        <taxon>Gunneridae</taxon>
        <taxon>Pentapetalae</taxon>
        <taxon>rosids</taxon>
        <taxon>malvids</taxon>
        <taxon>Brassicales</taxon>
        <taxon>Caricaceae</taxon>
        <taxon>Carica</taxon>
    </lineage>
</organism>
<gene>
    <name evidence="1" type="primary">rpl14</name>
</gene>
<dbReference type="EMBL" id="EU431223">
    <property type="protein sequence ID" value="ABY86819.1"/>
    <property type="molecule type" value="Genomic_DNA"/>
</dbReference>
<dbReference type="RefSeq" id="YP_001671719.1">
    <property type="nucleotide sequence ID" value="NC_010323.1"/>
</dbReference>
<dbReference type="SMR" id="B1A971"/>
<dbReference type="GeneID" id="5878436"/>
<dbReference type="KEGG" id="cpap:5878436"/>
<dbReference type="OrthoDB" id="1850746at2759"/>
<dbReference type="GO" id="GO:0009507">
    <property type="term" value="C:chloroplast"/>
    <property type="evidence" value="ECO:0007669"/>
    <property type="project" value="UniProtKB-SubCell"/>
</dbReference>
<dbReference type="GO" id="GO:0022625">
    <property type="term" value="C:cytosolic large ribosomal subunit"/>
    <property type="evidence" value="ECO:0007669"/>
    <property type="project" value="TreeGrafter"/>
</dbReference>
<dbReference type="GO" id="GO:0070180">
    <property type="term" value="F:large ribosomal subunit rRNA binding"/>
    <property type="evidence" value="ECO:0007669"/>
    <property type="project" value="TreeGrafter"/>
</dbReference>
<dbReference type="GO" id="GO:0003735">
    <property type="term" value="F:structural constituent of ribosome"/>
    <property type="evidence" value="ECO:0007669"/>
    <property type="project" value="InterPro"/>
</dbReference>
<dbReference type="GO" id="GO:0006412">
    <property type="term" value="P:translation"/>
    <property type="evidence" value="ECO:0007669"/>
    <property type="project" value="UniProtKB-UniRule"/>
</dbReference>
<dbReference type="CDD" id="cd00337">
    <property type="entry name" value="Ribosomal_uL14"/>
    <property type="match status" value="1"/>
</dbReference>
<dbReference type="FunFam" id="2.40.150.20:FF:000002">
    <property type="entry name" value="50S ribosomal protein L14, chloroplastic"/>
    <property type="match status" value="1"/>
</dbReference>
<dbReference type="Gene3D" id="2.40.150.20">
    <property type="entry name" value="Ribosomal protein L14"/>
    <property type="match status" value="1"/>
</dbReference>
<dbReference type="HAMAP" id="MF_01367">
    <property type="entry name" value="Ribosomal_uL14"/>
    <property type="match status" value="1"/>
</dbReference>
<dbReference type="InterPro" id="IPR000218">
    <property type="entry name" value="Ribosomal_uL14"/>
</dbReference>
<dbReference type="InterPro" id="IPR005745">
    <property type="entry name" value="Ribosomal_uL14_bac-type"/>
</dbReference>
<dbReference type="InterPro" id="IPR019972">
    <property type="entry name" value="Ribosomal_uL14_CS"/>
</dbReference>
<dbReference type="InterPro" id="IPR036853">
    <property type="entry name" value="Ribosomal_uL14_sf"/>
</dbReference>
<dbReference type="NCBIfam" id="TIGR01067">
    <property type="entry name" value="rplN_bact"/>
    <property type="match status" value="1"/>
</dbReference>
<dbReference type="PANTHER" id="PTHR11761">
    <property type="entry name" value="50S/60S RIBOSOMAL PROTEIN L14/L23"/>
    <property type="match status" value="1"/>
</dbReference>
<dbReference type="PANTHER" id="PTHR11761:SF3">
    <property type="entry name" value="LARGE RIBOSOMAL SUBUNIT PROTEIN UL14M"/>
    <property type="match status" value="1"/>
</dbReference>
<dbReference type="Pfam" id="PF00238">
    <property type="entry name" value="Ribosomal_L14"/>
    <property type="match status" value="1"/>
</dbReference>
<dbReference type="SMART" id="SM01374">
    <property type="entry name" value="Ribosomal_L14"/>
    <property type="match status" value="1"/>
</dbReference>
<dbReference type="SUPFAM" id="SSF50193">
    <property type="entry name" value="Ribosomal protein L14"/>
    <property type="match status" value="1"/>
</dbReference>
<dbReference type="PROSITE" id="PS00049">
    <property type="entry name" value="RIBOSOMAL_L14"/>
    <property type="match status" value="1"/>
</dbReference>
<proteinExistence type="inferred from homology"/>
<reference key="1">
    <citation type="journal article" date="2008" name="Nature">
        <title>The draft genome of the transgenic tropical fruit tree papaya (Carica papaya Linnaeus).</title>
        <authorList>
            <person name="Ming R."/>
            <person name="Hou S."/>
            <person name="Feng Y."/>
            <person name="Yu Q."/>
            <person name="Dionne-Laporte A."/>
            <person name="Saw J.H."/>
            <person name="Senin P."/>
            <person name="Wang W."/>
            <person name="Ly B.V."/>
            <person name="Lewis K.L."/>
            <person name="Salzberg S.L."/>
            <person name="Feng L."/>
            <person name="Jones M.R."/>
            <person name="Skelton R.L."/>
            <person name="Murray J.E."/>
            <person name="Chen C."/>
            <person name="Qian W."/>
            <person name="Shen J."/>
            <person name="Du P."/>
            <person name="Eustice M."/>
            <person name="Tong E."/>
            <person name="Tang H."/>
            <person name="Lyons E."/>
            <person name="Paull R.E."/>
            <person name="Michael T.P."/>
            <person name="Wall K."/>
            <person name="Rice D.W."/>
            <person name="Albert H."/>
            <person name="Wang M.L."/>
            <person name="Zhu Y.J."/>
            <person name="Schatz M."/>
            <person name="Nagarajan N."/>
            <person name="Acob R.A."/>
            <person name="Guan P."/>
            <person name="Blas A."/>
            <person name="Wai C.M."/>
            <person name="Ackerman C.M."/>
            <person name="Ren Y."/>
            <person name="Liu C."/>
            <person name="Wang J."/>
            <person name="Wang J."/>
            <person name="Na J.K."/>
            <person name="Shakirov E.V."/>
            <person name="Haas B."/>
            <person name="Thimmapuram J."/>
            <person name="Nelson D."/>
            <person name="Wang X."/>
            <person name="Bowers J.E."/>
            <person name="Gschwend A.R."/>
            <person name="Delcher A.L."/>
            <person name="Singh R."/>
            <person name="Suzuki J.Y."/>
            <person name="Tripathi S."/>
            <person name="Neupane K."/>
            <person name="Wei H."/>
            <person name="Irikura B."/>
            <person name="Paidi M."/>
            <person name="Jiang N."/>
            <person name="Zhang W."/>
            <person name="Presting G."/>
            <person name="Windsor A."/>
            <person name="Navajas-Perez R."/>
            <person name="Torres M.J."/>
            <person name="Feltus F.A."/>
            <person name="Porter B."/>
            <person name="Li Y."/>
            <person name="Burroughs A.M."/>
            <person name="Luo M.C."/>
            <person name="Liu L."/>
            <person name="Christopher D.A."/>
            <person name="Mount S.M."/>
            <person name="Moore P.H."/>
            <person name="Sugimura T."/>
            <person name="Jiang J."/>
            <person name="Schuler M.A."/>
            <person name="Friedman V."/>
            <person name="Mitchell-Olds T."/>
            <person name="Shippen D.E."/>
            <person name="dePamphilis C.W."/>
            <person name="Palmer J.D."/>
            <person name="Freeling M."/>
            <person name="Paterson A.H."/>
            <person name="Gonsalves D."/>
            <person name="Wang L."/>
            <person name="Alam M."/>
        </authorList>
    </citation>
    <scope>NUCLEOTIDE SEQUENCE [LARGE SCALE GENOMIC DNA]</scope>
    <source>
        <strain>cv. SunUp</strain>
    </source>
</reference>